<sequence>MVDSNDDQPERHALLHNDIQTSNNSRPSLVQKKYLPTPQDTRKSRASYTGSAMINPTSKQSRTGSGAQRTSRTAQKLKLLPEEPFQRDSERLTDLKNQEVYSQVNRIKDKPARRDAEKLGKAHRHLLPRSTAYCTASSYNMKELVRWLKDCRKLHHTHPKLFDECLYTPFIYNDWRGDKRFEDEDVIRLDDEGGEIIVSDKHPDLFIFEYGVVVMWGFTEREEKAFLNDIEKFEKEKLAEEDIQVEEFNYYVTKSYQPRIYNDFITLRDGSNYMVKLSISHAIAQSVKISLFEELVDNTIEDTQDIPQEIAYSGKVSMSKEDIMKSIGELFILRININLHGSVLDSPEIMWSEPQLEPIYQATRGYLEINQRVSLLNQRLEVISDLLQMLKEQLGHSHEEYLEFIVILLVGVEVLISVINIVVDMLASQH</sequence>
<gene>
    <name type="primary">RMD1</name>
    <name type="ordered locus">YDL001W</name>
</gene>
<keyword id="KW-0963">Cytoplasm</keyword>
<keyword id="KW-0469">Meiosis</keyword>
<keyword id="KW-1185">Reference proteome</keyword>
<keyword id="KW-0749">Sporulation</keyword>
<comment type="function">
    <text evidence="2">Required for sporulation where it is believed to have a role in meiotic nuclear division.</text>
</comment>
<comment type="subcellular location">
    <subcellularLocation>
        <location evidence="3">Cytoplasm</location>
    </subcellularLocation>
</comment>
<comment type="miscellaneous">
    <text evidence="4">Present with 952 molecules/cell in log phase SD medium.</text>
</comment>
<comment type="similarity">
    <text evidence="5">Belongs to the RMD1/sif2 family.</text>
</comment>
<comment type="sequence caution" evidence="5">
    <conflict type="frameshift">
        <sequence resource="EMBL-CDS" id="AAA66895"/>
    </conflict>
</comment>
<proteinExistence type="evidence at protein level"/>
<protein>
    <recommendedName>
        <fullName>Sporulation protein RMD1</fullName>
    </recommendedName>
    <alternativeName>
        <fullName>Required for meiotic nuclear division protein 1</fullName>
    </alternativeName>
</protein>
<feature type="chain" id="PRO_0000097360" description="Sporulation protein RMD1">
    <location>
        <begin position="1"/>
        <end position="430"/>
    </location>
</feature>
<feature type="region of interest" description="Disordered" evidence="1">
    <location>
        <begin position="1"/>
        <end position="73"/>
    </location>
</feature>
<feature type="compositionally biased region" description="Polar residues" evidence="1">
    <location>
        <begin position="18"/>
        <end position="28"/>
    </location>
</feature>
<feature type="compositionally biased region" description="Polar residues" evidence="1">
    <location>
        <begin position="46"/>
        <end position="73"/>
    </location>
</feature>
<name>RMD1_YEAST</name>
<evidence type="ECO:0000256" key="1">
    <source>
        <dbReference type="SAM" id="MobiDB-lite"/>
    </source>
</evidence>
<evidence type="ECO:0000269" key="2">
    <source>
    </source>
</evidence>
<evidence type="ECO:0000269" key="3">
    <source>
    </source>
</evidence>
<evidence type="ECO:0000269" key="4">
    <source>
    </source>
</evidence>
<evidence type="ECO:0000305" key="5"/>
<reference key="1">
    <citation type="journal article" date="1997" name="Nature">
        <title>The nucleotide sequence of Saccharomyces cerevisiae chromosome IV.</title>
        <authorList>
            <person name="Jacq C."/>
            <person name="Alt-Moerbe J."/>
            <person name="Andre B."/>
            <person name="Arnold W."/>
            <person name="Bahr A."/>
            <person name="Ballesta J.P.G."/>
            <person name="Bargues M."/>
            <person name="Baron L."/>
            <person name="Becker A."/>
            <person name="Biteau N."/>
            <person name="Bloecker H."/>
            <person name="Blugeon C."/>
            <person name="Boskovic J."/>
            <person name="Brandt P."/>
            <person name="Brueckner M."/>
            <person name="Buitrago M.J."/>
            <person name="Coster F."/>
            <person name="Delaveau T."/>
            <person name="del Rey F."/>
            <person name="Dujon B."/>
            <person name="Eide L.G."/>
            <person name="Garcia-Cantalejo J.M."/>
            <person name="Goffeau A."/>
            <person name="Gomez-Peris A."/>
            <person name="Granotier C."/>
            <person name="Hanemann V."/>
            <person name="Hankeln T."/>
            <person name="Hoheisel J.D."/>
            <person name="Jaeger W."/>
            <person name="Jimenez A."/>
            <person name="Jonniaux J.-L."/>
            <person name="Kraemer C."/>
            <person name="Kuester H."/>
            <person name="Laamanen P."/>
            <person name="Legros Y."/>
            <person name="Louis E.J."/>
            <person name="Moeller-Rieker S."/>
            <person name="Monnet A."/>
            <person name="Moro M."/>
            <person name="Mueller-Auer S."/>
            <person name="Nussbaumer B."/>
            <person name="Paricio N."/>
            <person name="Paulin L."/>
            <person name="Perea J."/>
            <person name="Perez-Alonso M."/>
            <person name="Perez-Ortin J.E."/>
            <person name="Pohl T.M."/>
            <person name="Prydz H."/>
            <person name="Purnelle B."/>
            <person name="Rasmussen S.W."/>
            <person name="Remacha M.A."/>
            <person name="Revuelta J.L."/>
            <person name="Rieger M."/>
            <person name="Salom D."/>
            <person name="Saluz H.P."/>
            <person name="Saiz J.E."/>
            <person name="Saren A.-M."/>
            <person name="Schaefer M."/>
            <person name="Scharfe M."/>
            <person name="Schmidt E.R."/>
            <person name="Schneider C."/>
            <person name="Scholler P."/>
            <person name="Schwarz S."/>
            <person name="Soler-Mira A."/>
            <person name="Urrestarazu L.A."/>
            <person name="Verhasselt P."/>
            <person name="Vissers S."/>
            <person name="Voet M."/>
            <person name="Volckaert G."/>
            <person name="Wagner G."/>
            <person name="Wambutt R."/>
            <person name="Wedler E."/>
            <person name="Wedler H."/>
            <person name="Woelfl S."/>
            <person name="Harris D.E."/>
            <person name="Bowman S."/>
            <person name="Brown D."/>
            <person name="Churcher C.M."/>
            <person name="Connor R."/>
            <person name="Dedman K."/>
            <person name="Gentles S."/>
            <person name="Hamlin N."/>
            <person name="Hunt S."/>
            <person name="Jones L."/>
            <person name="McDonald S."/>
            <person name="Murphy L.D."/>
            <person name="Niblett D."/>
            <person name="Odell C."/>
            <person name="Oliver K."/>
            <person name="Rajandream M.A."/>
            <person name="Richards C."/>
            <person name="Shore L."/>
            <person name="Walsh S.V."/>
            <person name="Barrell B.G."/>
            <person name="Dietrich F.S."/>
            <person name="Mulligan J.T."/>
            <person name="Allen E."/>
            <person name="Araujo R."/>
            <person name="Aviles E."/>
            <person name="Berno A."/>
            <person name="Carpenter J."/>
            <person name="Chen E."/>
            <person name="Cherry J.M."/>
            <person name="Chung E."/>
            <person name="Duncan M."/>
            <person name="Hunicke-Smith S."/>
            <person name="Hyman R.W."/>
            <person name="Komp C."/>
            <person name="Lashkari D."/>
            <person name="Lew H."/>
            <person name="Lin D."/>
            <person name="Mosedale D."/>
            <person name="Nakahara K."/>
            <person name="Namath A."/>
            <person name="Oefner P."/>
            <person name="Oh C."/>
            <person name="Petel F.X."/>
            <person name="Roberts D."/>
            <person name="Schramm S."/>
            <person name="Schroeder M."/>
            <person name="Shogren T."/>
            <person name="Shroff N."/>
            <person name="Winant A."/>
            <person name="Yelton M.A."/>
            <person name="Botstein D."/>
            <person name="Davis R.W."/>
            <person name="Johnston M."/>
            <person name="Andrews S."/>
            <person name="Brinkman R."/>
            <person name="Cooper J."/>
            <person name="Ding H."/>
            <person name="Du Z."/>
            <person name="Favello A."/>
            <person name="Fulton L."/>
            <person name="Gattung S."/>
            <person name="Greco T."/>
            <person name="Hallsworth K."/>
            <person name="Hawkins J."/>
            <person name="Hillier L.W."/>
            <person name="Jier M."/>
            <person name="Johnson D."/>
            <person name="Johnston L."/>
            <person name="Kirsten J."/>
            <person name="Kucaba T."/>
            <person name="Langston Y."/>
            <person name="Latreille P."/>
            <person name="Le T."/>
            <person name="Mardis E."/>
            <person name="Menezes S."/>
            <person name="Miller N."/>
            <person name="Nhan M."/>
            <person name="Pauley A."/>
            <person name="Peluso D."/>
            <person name="Rifkin L."/>
            <person name="Riles L."/>
            <person name="Taich A."/>
            <person name="Trevaskis E."/>
            <person name="Vignati D."/>
            <person name="Wilcox L."/>
            <person name="Wohldman P."/>
            <person name="Vaudin M."/>
            <person name="Wilson R."/>
            <person name="Waterston R."/>
            <person name="Albermann K."/>
            <person name="Hani J."/>
            <person name="Heumann K."/>
            <person name="Kleine K."/>
            <person name="Mewes H.-W."/>
            <person name="Zollner A."/>
            <person name="Zaccaria P."/>
        </authorList>
    </citation>
    <scope>NUCLEOTIDE SEQUENCE [LARGE SCALE GENOMIC DNA]</scope>
    <source>
        <strain>ATCC 204508 / S288c</strain>
    </source>
</reference>
<reference key="2">
    <citation type="journal article" date="2014" name="G3 (Bethesda)">
        <title>The reference genome sequence of Saccharomyces cerevisiae: Then and now.</title>
        <authorList>
            <person name="Engel S.R."/>
            <person name="Dietrich F.S."/>
            <person name="Fisk D.G."/>
            <person name="Binkley G."/>
            <person name="Balakrishnan R."/>
            <person name="Costanzo M.C."/>
            <person name="Dwight S.S."/>
            <person name="Hitz B.C."/>
            <person name="Karra K."/>
            <person name="Nash R.S."/>
            <person name="Weng S."/>
            <person name="Wong E.D."/>
            <person name="Lloyd P."/>
            <person name="Skrzypek M.S."/>
            <person name="Miyasato S.R."/>
            <person name="Simison M."/>
            <person name="Cherry J.M."/>
        </authorList>
    </citation>
    <scope>GENOME REANNOTATION</scope>
    <source>
        <strain>ATCC 204508 / S288c</strain>
    </source>
</reference>
<reference key="3">
    <citation type="journal article" date="1986" name="Mol. Cell. Biol.">
        <title>Structure and sequence of the centromeric DNA of chromosome 4 in Saccharomyces cerevisiae.</title>
        <authorList>
            <person name="Mann C."/>
            <person name="Davis R.W."/>
        </authorList>
    </citation>
    <scope>NUCLEOTIDE SEQUENCE [GENOMIC DNA] OF 281-430</scope>
    <source>
        <strain>ATCC 204508 / S288c</strain>
    </source>
</reference>
<reference key="4">
    <citation type="submission" date="1987-06" db="EMBL/GenBank/DDBJ databases">
        <authorList>
            <person name="Sapolsky R."/>
        </authorList>
    </citation>
    <scope>SEQUENCE REVISION</scope>
</reference>
<reference key="5">
    <citation type="journal article" date="2003" name="Genetics">
        <title>Large-scale functional genomic analysis of sporulation and meiosis in Saccharomyces cerevisiae.</title>
        <authorList>
            <person name="Enyenihi A.H."/>
            <person name="Saunders W.S."/>
        </authorList>
    </citation>
    <scope>FUNCTION</scope>
</reference>
<reference key="6">
    <citation type="journal article" date="2003" name="Nature">
        <title>Global analysis of protein localization in budding yeast.</title>
        <authorList>
            <person name="Huh W.-K."/>
            <person name="Falvo J.V."/>
            <person name="Gerke L.C."/>
            <person name="Carroll A.S."/>
            <person name="Howson R.W."/>
            <person name="Weissman J.S."/>
            <person name="O'Shea E.K."/>
        </authorList>
    </citation>
    <scope>SUBCELLULAR LOCATION [LARGE SCALE ANALYSIS]</scope>
</reference>
<reference key="7">
    <citation type="journal article" date="2003" name="Nature">
        <title>Global analysis of protein expression in yeast.</title>
        <authorList>
            <person name="Ghaemmaghami S."/>
            <person name="Huh W.-K."/>
            <person name="Bower K."/>
            <person name="Howson R.W."/>
            <person name="Belle A."/>
            <person name="Dephoure N."/>
            <person name="O'Shea E.K."/>
            <person name="Weissman J.S."/>
        </authorList>
    </citation>
    <scope>LEVEL OF PROTEIN EXPRESSION [LARGE SCALE ANALYSIS]</scope>
</reference>
<reference key="8">
    <citation type="journal article" date="2012" name="Proc. Natl. Acad. Sci. U.S.A.">
        <title>N-terminal acetylome analyses and functional insights of the N-terminal acetyltransferase NatB.</title>
        <authorList>
            <person name="Van Damme P."/>
            <person name="Lasa M."/>
            <person name="Polevoda B."/>
            <person name="Gazquez C."/>
            <person name="Elosegui-Artola A."/>
            <person name="Kim D.S."/>
            <person name="De Juan-Pardo E."/>
            <person name="Demeyer K."/>
            <person name="Hole K."/>
            <person name="Larrea E."/>
            <person name="Timmerman E."/>
            <person name="Prieto J."/>
            <person name="Arnesen T."/>
            <person name="Sherman F."/>
            <person name="Gevaert K."/>
            <person name="Aldabe R."/>
        </authorList>
    </citation>
    <scope>IDENTIFICATION BY MASS SPECTROMETRY [LARGE SCALE ANALYSIS]</scope>
</reference>
<accession>Q03441</accession>
<accession>D6VRY7</accession>
<accession>Q05210</accession>
<dbReference type="EMBL" id="Z48008">
    <property type="protein sequence ID" value="CAA88060.1"/>
    <property type="molecule type" value="Genomic_DNA"/>
</dbReference>
<dbReference type="EMBL" id="M13000">
    <property type="protein sequence ID" value="AAA66895.1"/>
    <property type="status" value="ALT_FRAME"/>
    <property type="molecule type" value="Genomic_DNA"/>
</dbReference>
<dbReference type="EMBL" id="BK006938">
    <property type="protein sequence ID" value="DAA11847.1"/>
    <property type="molecule type" value="Genomic_DNA"/>
</dbReference>
<dbReference type="PIR" id="S50981">
    <property type="entry name" value="S50981"/>
</dbReference>
<dbReference type="RefSeq" id="NP_010283.3">
    <property type="nucleotide sequence ID" value="NM_001180060.3"/>
</dbReference>
<dbReference type="BioGRID" id="32053">
    <property type="interactions" value="182"/>
</dbReference>
<dbReference type="DIP" id="DIP-857N"/>
<dbReference type="FunCoup" id="Q03441">
    <property type="interactions" value="152"/>
</dbReference>
<dbReference type="IntAct" id="Q03441">
    <property type="interactions" value="28"/>
</dbReference>
<dbReference type="MINT" id="Q03441"/>
<dbReference type="STRING" id="4932.YDL001W"/>
<dbReference type="GlyGen" id="Q03441">
    <property type="glycosylation" value="1 site, 1 O-linked glycan (1 site)"/>
</dbReference>
<dbReference type="iPTMnet" id="Q03441"/>
<dbReference type="PaxDb" id="4932-YDL001W"/>
<dbReference type="PeptideAtlas" id="Q03441"/>
<dbReference type="EnsemblFungi" id="YDL001W_mRNA">
    <property type="protein sequence ID" value="YDL001W"/>
    <property type="gene ID" value="YDL001W"/>
</dbReference>
<dbReference type="GeneID" id="851563"/>
<dbReference type="KEGG" id="sce:YDL001W"/>
<dbReference type="AGR" id="SGD:S000002159"/>
<dbReference type="SGD" id="S000002159">
    <property type="gene designation" value="RMD1"/>
</dbReference>
<dbReference type="VEuPathDB" id="FungiDB:YDL001W"/>
<dbReference type="eggNOG" id="KOG2861">
    <property type="taxonomic scope" value="Eukaryota"/>
</dbReference>
<dbReference type="GeneTree" id="ENSGT00390000013337"/>
<dbReference type="HOGENOM" id="CLU_011220_1_2_1"/>
<dbReference type="InParanoid" id="Q03441"/>
<dbReference type="OMA" id="HHTHPKL"/>
<dbReference type="OrthoDB" id="18302at2759"/>
<dbReference type="BioCyc" id="YEAST:G3O-29432-MONOMER"/>
<dbReference type="BioGRID-ORCS" id="851563">
    <property type="hits" value="0 hits in 10 CRISPR screens"/>
</dbReference>
<dbReference type="PRO" id="PR:Q03441"/>
<dbReference type="Proteomes" id="UP000002311">
    <property type="component" value="Chromosome IV"/>
</dbReference>
<dbReference type="RNAct" id="Q03441">
    <property type="molecule type" value="protein"/>
</dbReference>
<dbReference type="GO" id="GO:0005737">
    <property type="term" value="C:cytoplasm"/>
    <property type="evidence" value="ECO:0007005"/>
    <property type="project" value="SGD"/>
</dbReference>
<dbReference type="GO" id="GO:0000329">
    <property type="term" value="C:fungal-type vacuole membrane"/>
    <property type="evidence" value="ECO:0007005"/>
    <property type="project" value="SGD"/>
</dbReference>
<dbReference type="GO" id="GO:0005739">
    <property type="term" value="C:mitochondrion"/>
    <property type="evidence" value="ECO:0007669"/>
    <property type="project" value="UniProtKB-ARBA"/>
</dbReference>
<dbReference type="GO" id="GO:0051321">
    <property type="term" value="P:meiotic cell cycle"/>
    <property type="evidence" value="ECO:0007669"/>
    <property type="project" value="UniProtKB-KW"/>
</dbReference>
<dbReference type="GO" id="GO:0030435">
    <property type="term" value="P:sporulation resulting in formation of a cellular spore"/>
    <property type="evidence" value="ECO:0007669"/>
    <property type="project" value="UniProtKB-KW"/>
</dbReference>
<dbReference type="InterPro" id="IPR003734">
    <property type="entry name" value="DUF155"/>
</dbReference>
<dbReference type="InterPro" id="IPR051624">
    <property type="entry name" value="RMD1/Sad1-interacting"/>
</dbReference>
<dbReference type="PANTHER" id="PTHR16255">
    <property type="entry name" value="REQUIRED FOR MEIOTIC NUCLEAR DIVISION PROTEIN 1 HOMOLOG"/>
    <property type="match status" value="1"/>
</dbReference>
<dbReference type="PANTHER" id="PTHR16255:SF15">
    <property type="entry name" value="SPORULATION PROTEIN RMD1"/>
    <property type="match status" value="1"/>
</dbReference>
<dbReference type="Pfam" id="PF02582">
    <property type="entry name" value="DUF155"/>
    <property type="match status" value="1"/>
</dbReference>
<organism>
    <name type="scientific">Saccharomyces cerevisiae (strain ATCC 204508 / S288c)</name>
    <name type="common">Baker's yeast</name>
    <dbReference type="NCBI Taxonomy" id="559292"/>
    <lineage>
        <taxon>Eukaryota</taxon>
        <taxon>Fungi</taxon>
        <taxon>Dikarya</taxon>
        <taxon>Ascomycota</taxon>
        <taxon>Saccharomycotina</taxon>
        <taxon>Saccharomycetes</taxon>
        <taxon>Saccharomycetales</taxon>
        <taxon>Saccharomycetaceae</taxon>
        <taxon>Saccharomyces</taxon>
    </lineage>
</organism>